<proteinExistence type="inferred from homology"/>
<reference key="1">
    <citation type="journal article" date="2001" name="Proc. Natl. Acad. Sci. U.S.A.">
        <title>Analysis of the chromosome sequence of the legume symbiont Sinorhizobium meliloti strain 1021.</title>
        <authorList>
            <person name="Capela D."/>
            <person name="Barloy-Hubler F."/>
            <person name="Gouzy J."/>
            <person name="Bothe G."/>
            <person name="Ampe F."/>
            <person name="Batut J."/>
            <person name="Boistard P."/>
            <person name="Becker A."/>
            <person name="Boutry M."/>
            <person name="Cadieu E."/>
            <person name="Dreano S."/>
            <person name="Gloux S."/>
            <person name="Godrie T."/>
            <person name="Goffeau A."/>
            <person name="Kahn D."/>
            <person name="Kiss E."/>
            <person name="Lelaure V."/>
            <person name="Masuy D."/>
            <person name="Pohl T."/>
            <person name="Portetelle D."/>
            <person name="Puehler A."/>
            <person name="Purnelle B."/>
            <person name="Ramsperger U."/>
            <person name="Renard C."/>
            <person name="Thebault P."/>
            <person name="Vandenbol M."/>
            <person name="Weidner S."/>
            <person name="Galibert F."/>
        </authorList>
    </citation>
    <scope>NUCLEOTIDE SEQUENCE [LARGE SCALE GENOMIC DNA]</scope>
    <source>
        <strain>1021</strain>
    </source>
</reference>
<reference key="2">
    <citation type="journal article" date="2001" name="Science">
        <title>The composite genome of the legume symbiont Sinorhizobium meliloti.</title>
        <authorList>
            <person name="Galibert F."/>
            <person name="Finan T.M."/>
            <person name="Long S.R."/>
            <person name="Puehler A."/>
            <person name="Abola P."/>
            <person name="Ampe F."/>
            <person name="Barloy-Hubler F."/>
            <person name="Barnett M.J."/>
            <person name="Becker A."/>
            <person name="Boistard P."/>
            <person name="Bothe G."/>
            <person name="Boutry M."/>
            <person name="Bowser L."/>
            <person name="Buhrmester J."/>
            <person name="Cadieu E."/>
            <person name="Capela D."/>
            <person name="Chain P."/>
            <person name="Cowie A."/>
            <person name="Davis R.W."/>
            <person name="Dreano S."/>
            <person name="Federspiel N.A."/>
            <person name="Fisher R.F."/>
            <person name="Gloux S."/>
            <person name="Godrie T."/>
            <person name="Goffeau A."/>
            <person name="Golding B."/>
            <person name="Gouzy J."/>
            <person name="Gurjal M."/>
            <person name="Hernandez-Lucas I."/>
            <person name="Hong A."/>
            <person name="Huizar L."/>
            <person name="Hyman R.W."/>
            <person name="Jones T."/>
            <person name="Kahn D."/>
            <person name="Kahn M.L."/>
            <person name="Kalman S."/>
            <person name="Keating D.H."/>
            <person name="Kiss E."/>
            <person name="Komp C."/>
            <person name="Lelaure V."/>
            <person name="Masuy D."/>
            <person name="Palm C."/>
            <person name="Peck M.C."/>
            <person name="Pohl T.M."/>
            <person name="Portetelle D."/>
            <person name="Purnelle B."/>
            <person name="Ramsperger U."/>
            <person name="Surzycki R."/>
            <person name="Thebault P."/>
            <person name="Vandenbol M."/>
            <person name="Vorhoelter F.J."/>
            <person name="Weidner S."/>
            <person name="Wells D.H."/>
            <person name="Wong K."/>
            <person name="Yeh K.-C."/>
            <person name="Batut J."/>
        </authorList>
    </citation>
    <scope>NUCLEOTIDE SEQUENCE [LARGE SCALE GENOMIC DNA]</scope>
    <source>
        <strain>1021</strain>
    </source>
</reference>
<reference key="3">
    <citation type="journal article" date="1998" name="J. Bacteriol.">
        <title>Phosphate assimilation in Rhizobium (Sinorhizobium) meliloti: identification of a pit-like gene.</title>
        <authorList>
            <person name="Bardin S.D."/>
            <person name="Voegele R.T."/>
            <person name="Finan T.M."/>
        </authorList>
    </citation>
    <scope>NUCLEOTIDE SEQUENCE [GENOMIC DNA] OF 1-176</scope>
    <source>
        <strain>SU47 / 1021</strain>
    </source>
</reference>
<name>RECF_RHIME</name>
<sequence length="374" mass="40596">MPHKVFLTRLKLSDFRNYATLALDLDQRHVVLTGENGAGKTNLMEGVSFLSPGRGLRRAAYADVARVGAPDGFSVFAAVDGMEGSVEIGTGTQGTEEGQSRRLRINGTAARTVDELTDHLRVLWLTPAMDGLFTGPSADRRRFLDRLVLSLDPEHGRRASEFDRAMRSRNRLLSEFRPDPAWLSAIEREMAGLGISMALARQEMLGLLSALVERSRSDGTFPSASLSLAGFLDDCAGIPAFELEERYLAMLAEGRARDAAAGRTLDGPHRSDLLIRHREKDIEAERCSTGEQKALLVGLVLAHARLVGDMTGHAPVLLLDEIAAHLDQGRRAALFDLVDGLGGQSFMTGTDRAMFDALGERAQYLAVANGRVSG</sequence>
<protein>
    <recommendedName>
        <fullName>DNA replication and repair protein RecF</fullName>
    </recommendedName>
</protein>
<comment type="function">
    <text evidence="1">The RecF protein is involved in DNA metabolism; it is required for DNA replication and normal SOS inducibility. RecF binds preferentially to single-stranded, linear DNA. It also seems to bind ATP (By similarity).</text>
</comment>
<comment type="subcellular location">
    <subcellularLocation>
        <location evidence="1">Cytoplasm</location>
    </subcellularLocation>
</comment>
<comment type="similarity">
    <text evidence="3">Belongs to the RecF family.</text>
</comment>
<organism>
    <name type="scientific">Rhizobium meliloti (strain 1021)</name>
    <name type="common">Ensifer meliloti</name>
    <name type="synonym">Sinorhizobium meliloti</name>
    <dbReference type="NCBI Taxonomy" id="266834"/>
    <lineage>
        <taxon>Bacteria</taxon>
        <taxon>Pseudomonadati</taxon>
        <taxon>Pseudomonadota</taxon>
        <taxon>Alphaproteobacteria</taxon>
        <taxon>Hyphomicrobiales</taxon>
        <taxon>Rhizobiaceae</taxon>
        <taxon>Sinorhizobium/Ensifer group</taxon>
        <taxon>Sinorhizobium</taxon>
    </lineage>
</organism>
<gene>
    <name type="primary">recF</name>
    <name type="ordered locus">R00188</name>
    <name type="ORF">SMc02863</name>
</gene>
<dbReference type="EMBL" id="AL591688">
    <property type="protein sequence ID" value="CAC41575.1"/>
    <property type="molecule type" value="Genomic_DNA"/>
</dbReference>
<dbReference type="EMBL" id="AF008187">
    <property type="protein sequence ID" value="AAB70169.2"/>
    <property type="molecule type" value="Genomic_DNA"/>
</dbReference>
<dbReference type="RefSeq" id="NP_384294.1">
    <property type="nucleotide sequence ID" value="NC_003047.1"/>
</dbReference>
<dbReference type="RefSeq" id="WP_003531898.1">
    <property type="nucleotide sequence ID" value="NC_003047.1"/>
</dbReference>
<dbReference type="SMR" id="P56903"/>
<dbReference type="EnsemblBacteria" id="CAC41575">
    <property type="protein sequence ID" value="CAC41575"/>
    <property type="gene ID" value="SMc02863"/>
</dbReference>
<dbReference type="KEGG" id="sme:SMc02863"/>
<dbReference type="PATRIC" id="fig|266834.11.peg.1550"/>
<dbReference type="eggNOG" id="COG1195">
    <property type="taxonomic scope" value="Bacteria"/>
</dbReference>
<dbReference type="HOGENOM" id="CLU_040267_2_0_5"/>
<dbReference type="OrthoDB" id="9803889at2"/>
<dbReference type="Proteomes" id="UP000001976">
    <property type="component" value="Chromosome"/>
</dbReference>
<dbReference type="GO" id="GO:0005737">
    <property type="term" value="C:cytoplasm"/>
    <property type="evidence" value="ECO:0007669"/>
    <property type="project" value="UniProtKB-SubCell"/>
</dbReference>
<dbReference type="GO" id="GO:0005524">
    <property type="term" value="F:ATP binding"/>
    <property type="evidence" value="ECO:0007669"/>
    <property type="project" value="UniProtKB-UniRule"/>
</dbReference>
<dbReference type="GO" id="GO:0016887">
    <property type="term" value="F:ATP hydrolysis activity"/>
    <property type="evidence" value="ECO:0007669"/>
    <property type="project" value="InterPro"/>
</dbReference>
<dbReference type="GO" id="GO:0003697">
    <property type="term" value="F:single-stranded DNA binding"/>
    <property type="evidence" value="ECO:0007669"/>
    <property type="project" value="UniProtKB-UniRule"/>
</dbReference>
<dbReference type="GO" id="GO:0006260">
    <property type="term" value="P:DNA replication"/>
    <property type="evidence" value="ECO:0007669"/>
    <property type="project" value="UniProtKB-UniRule"/>
</dbReference>
<dbReference type="GO" id="GO:0000731">
    <property type="term" value="P:DNA synthesis involved in DNA repair"/>
    <property type="evidence" value="ECO:0007669"/>
    <property type="project" value="TreeGrafter"/>
</dbReference>
<dbReference type="GO" id="GO:0006302">
    <property type="term" value="P:double-strand break repair"/>
    <property type="evidence" value="ECO:0007669"/>
    <property type="project" value="TreeGrafter"/>
</dbReference>
<dbReference type="GO" id="GO:0009432">
    <property type="term" value="P:SOS response"/>
    <property type="evidence" value="ECO:0007669"/>
    <property type="project" value="UniProtKB-UniRule"/>
</dbReference>
<dbReference type="CDD" id="cd03242">
    <property type="entry name" value="ABC_RecF"/>
    <property type="match status" value="1"/>
</dbReference>
<dbReference type="Gene3D" id="3.40.50.300">
    <property type="entry name" value="P-loop containing nucleotide triphosphate hydrolases"/>
    <property type="match status" value="1"/>
</dbReference>
<dbReference type="Gene3D" id="1.20.1050.90">
    <property type="entry name" value="RecF/RecN/SMC, N-terminal domain"/>
    <property type="match status" value="1"/>
</dbReference>
<dbReference type="HAMAP" id="MF_00365">
    <property type="entry name" value="RecF"/>
    <property type="match status" value="1"/>
</dbReference>
<dbReference type="InterPro" id="IPR003593">
    <property type="entry name" value="AAA+_ATPase"/>
</dbReference>
<dbReference type="InterPro" id="IPR001238">
    <property type="entry name" value="DNA-binding_RecF"/>
</dbReference>
<dbReference type="InterPro" id="IPR018078">
    <property type="entry name" value="DNA-binding_RecF_CS"/>
</dbReference>
<dbReference type="InterPro" id="IPR027417">
    <property type="entry name" value="P-loop_NTPase"/>
</dbReference>
<dbReference type="InterPro" id="IPR003395">
    <property type="entry name" value="RecF/RecN/SMC_N"/>
</dbReference>
<dbReference type="InterPro" id="IPR042174">
    <property type="entry name" value="RecF_2"/>
</dbReference>
<dbReference type="NCBIfam" id="TIGR00611">
    <property type="entry name" value="recf"/>
    <property type="match status" value="1"/>
</dbReference>
<dbReference type="PANTHER" id="PTHR32182">
    <property type="entry name" value="DNA REPLICATION AND REPAIR PROTEIN RECF"/>
    <property type="match status" value="1"/>
</dbReference>
<dbReference type="PANTHER" id="PTHR32182:SF0">
    <property type="entry name" value="DNA REPLICATION AND REPAIR PROTEIN RECF"/>
    <property type="match status" value="1"/>
</dbReference>
<dbReference type="Pfam" id="PF02463">
    <property type="entry name" value="SMC_N"/>
    <property type="match status" value="1"/>
</dbReference>
<dbReference type="SMART" id="SM00382">
    <property type="entry name" value="AAA"/>
    <property type="match status" value="1"/>
</dbReference>
<dbReference type="SUPFAM" id="SSF52540">
    <property type="entry name" value="P-loop containing nucleoside triphosphate hydrolases"/>
    <property type="match status" value="1"/>
</dbReference>
<dbReference type="PROSITE" id="PS00617">
    <property type="entry name" value="RECF_1"/>
    <property type="match status" value="1"/>
</dbReference>
<dbReference type="PROSITE" id="PS00618">
    <property type="entry name" value="RECF_2"/>
    <property type="match status" value="1"/>
</dbReference>
<accession>P56903</accession>
<accession>O30497</accession>
<evidence type="ECO:0000250" key="1"/>
<evidence type="ECO:0000255" key="2"/>
<evidence type="ECO:0000305" key="3"/>
<keyword id="KW-0067">ATP-binding</keyword>
<keyword id="KW-0963">Cytoplasm</keyword>
<keyword id="KW-0227">DNA damage</keyword>
<keyword id="KW-0234">DNA repair</keyword>
<keyword id="KW-0235">DNA replication</keyword>
<keyword id="KW-0238">DNA-binding</keyword>
<keyword id="KW-0547">Nucleotide-binding</keyword>
<keyword id="KW-1185">Reference proteome</keyword>
<keyword id="KW-0742">SOS response</keyword>
<feature type="chain" id="PRO_0000196448" description="DNA replication and repair protein RecF">
    <location>
        <begin position="1"/>
        <end position="374"/>
    </location>
</feature>
<feature type="binding site" evidence="2">
    <location>
        <begin position="34"/>
        <end position="41"/>
    </location>
    <ligand>
        <name>ATP</name>
        <dbReference type="ChEBI" id="CHEBI:30616"/>
    </ligand>
</feature>
<feature type="sequence conflict" description="In Ref. 2; AAB70169." evidence="3" ref="2">
    <original>RNRLLSEF</original>
    <variation>ATGFSRNS</variation>
    <location>
        <begin position="169"/>
        <end position="176"/>
    </location>
</feature>